<name>SPSY_YEAST</name>
<sequence>MVNNSQHPYIKDGWFREINDKSFPGQAFTMTVDSILYEARSEFQDILIFRNKVYGTVLVLDGIVQCTEFDEFAYQEMITHIAMFAHSNPKRVLIIGGGDGGVLREVAKHSCVEDITMVEIDSSVIELSRKFLPTLSNGAFDDERLDLKLCDGFKFLQDIGASDVHKKFDVIITDSSDPEGPAEAFFQERYFELLKDALNPNGVVIMQSSENFWLNLKYLHDLKNTAKKVFPNTEYCYTMVPTYTSGQLGLIVCSNNANIPLNIPQRKISEQEQGKLKYYNPQIHSSAFVLPTWADKVINE</sequence>
<organism>
    <name type="scientific">Saccharomyces cerevisiae (strain ATCC 204508 / S288c)</name>
    <name type="common">Baker's yeast</name>
    <dbReference type="NCBI Taxonomy" id="559292"/>
    <lineage>
        <taxon>Eukaryota</taxon>
        <taxon>Fungi</taxon>
        <taxon>Dikarya</taxon>
        <taxon>Ascomycota</taxon>
        <taxon>Saccharomycotina</taxon>
        <taxon>Saccharomycetes</taxon>
        <taxon>Saccharomycetales</taxon>
        <taxon>Saccharomycetaceae</taxon>
        <taxon>Saccharomyces</taxon>
    </lineage>
</organism>
<reference key="1">
    <citation type="journal article" date="1998" name="Gene">
        <title>Spermine is not essential for growth of Saccharomyces cerevisiae: identification of the SPE4 gene (spermine synthase) and characterization of a spe4 deletion mutant.</title>
        <authorList>
            <person name="Hamasaki-Katagiri N."/>
            <person name="Katagiri Y."/>
            <person name="Tabor C.W."/>
            <person name="Tabor H."/>
        </authorList>
    </citation>
    <scope>NUCLEOTIDE SEQUENCE [GENOMIC DNA]</scope>
    <scope>CATALYTIC ACTIVITY</scope>
    <source>
        <strain>2602</strain>
    </source>
</reference>
<reference key="2">
    <citation type="journal article" date="1997" name="Nature">
        <title>The nucleotide sequence of Saccharomyces cerevisiae chromosome XII.</title>
        <authorList>
            <person name="Johnston M."/>
            <person name="Hillier L.W."/>
            <person name="Riles L."/>
            <person name="Albermann K."/>
            <person name="Andre B."/>
            <person name="Ansorge W."/>
            <person name="Benes V."/>
            <person name="Brueckner M."/>
            <person name="Delius H."/>
            <person name="Dubois E."/>
            <person name="Duesterhoeft A."/>
            <person name="Entian K.-D."/>
            <person name="Floeth M."/>
            <person name="Goffeau A."/>
            <person name="Hebling U."/>
            <person name="Heumann K."/>
            <person name="Heuss-Neitzel D."/>
            <person name="Hilbert H."/>
            <person name="Hilger F."/>
            <person name="Kleine K."/>
            <person name="Koetter P."/>
            <person name="Louis E.J."/>
            <person name="Messenguy F."/>
            <person name="Mewes H.-W."/>
            <person name="Miosga T."/>
            <person name="Moestl D."/>
            <person name="Mueller-Auer S."/>
            <person name="Nentwich U."/>
            <person name="Obermaier B."/>
            <person name="Piravandi E."/>
            <person name="Pohl T.M."/>
            <person name="Portetelle D."/>
            <person name="Purnelle B."/>
            <person name="Rechmann S."/>
            <person name="Rieger M."/>
            <person name="Rinke M."/>
            <person name="Rose M."/>
            <person name="Scharfe M."/>
            <person name="Scherens B."/>
            <person name="Scholler P."/>
            <person name="Schwager C."/>
            <person name="Schwarz S."/>
            <person name="Underwood A.P."/>
            <person name="Urrestarazu L.A."/>
            <person name="Vandenbol M."/>
            <person name="Verhasselt P."/>
            <person name="Vierendeels F."/>
            <person name="Voet M."/>
            <person name="Volckaert G."/>
            <person name="Voss H."/>
            <person name="Wambutt R."/>
            <person name="Wedler E."/>
            <person name="Wedler H."/>
            <person name="Zimmermann F.K."/>
            <person name="Zollner A."/>
            <person name="Hani J."/>
            <person name="Hoheisel J.D."/>
        </authorList>
    </citation>
    <scope>NUCLEOTIDE SEQUENCE [LARGE SCALE GENOMIC DNA]</scope>
    <source>
        <strain>ATCC 204508 / S288c</strain>
    </source>
</reference>
<reference key="3">
    <citation type="journal article" date="2014" name="G3 (Bethesda)">
        <title>The reference genome sequence of Saccharomyces cerevisiae: Then and now.</title>
        <authorList>
            <person name="Engel S.R."/>
            <person name="Dietrich F.S."/>
            <person name="Fisk D.G."/>
            <person name="Binkley G."/>
            <person name="Balakrishnan R."/>
            <person name="Costanzo M.C."/>
            <person name="Dwight S.S."/>
            <person name="Hitz B.C."/>
            <person name="Karra K."/>
            <person name="Nash R.S."/>
            <person name="Weng S."/>
            <person name="Wong E.D."/>
            <person name="Lloyd P."/>
            <person name="Skrzypek M.S."/>
            <person name="Miyasato S.R."/>
            <person name="Simison M."/>
            <person name="Cherry J.M."/>
        </authorList>
    </citation>
    <scope>GENOME REANNOTATION</scope>
    <source>
        <strain>ATCC 204508 / S288c</strain>
    </source>
</reference>
<reference key="4">
    <citation type="journal article" date="2005" name="Nucleic Acids Res.">
        <title>Mapping of transcription start sites in Saccharomyces cerevisiae using 5' SAGE.</title>
        <authorList>
            <person name="Zhang Z."/>
            <person name="Dietrich F.S."/>
        </authorList>
    </citation>
    <scope>NUCLEOTIDE SEQUENCE [MRNA] OF 1-82</scope>
    <source>
        <strain>ATCC 208353 / W303-1A</strain>
    </source>
</reference>
<reference key="5">
    <citation type="journal article" date="2003" name="Nature">
        <title>Global analysis of protein expression in yeast.</title>
        <authorList>
            <person name="Ghaemmaghami S."/>
            <person name="Huh W.-K."/>
            <person name="Bower K."/>
            <person name="Howson R.W."/>
            <person name="Belle A."/>
            <person name="Dephoure N."/>
            <person name="O'Shea E.K."/>
            <person name="Weissman J.S."/>
        </authorList>
    </citation>
    <scope>LEVEL OF PROTEIN EXPRESSION [LARGE SCALE ANALYSIS]</scope>
</reference>
<reference key="6">
    <citation type="journal article" date="2008" name="Mol. Cell. Proteomics">
        <title>A multidimensional chromatography technology for in-depth phosphoproteome analysis.</title>
        <authorList>
            <person name="Albuquerque C.P."/>
            <person name="Smolka M.B."/>
            <person name="Payne S.H."/>
            <person name="Bafna V."/>
            <person name="Eng J."/>
            <person name="Zhou H."/>
        </authorList>
    </citation>
    <scope>PHOSPHORYLATION [LARGE SCALE ANALYSIS] AT SER-5</scope>
    <scope>IDENTIFICATION BY MASS SPECTROMETRY [LARGE SCALE ANALYSIS]</scope>
</reference>
<protein>
    <recommendedName>
        <fullName>Spermine synthase SPE4</fullName>
        <shortName>SPMSY</shortName>
        <ecNumber evidence="3">2.5.1.22</ecNumber>
    </recommendedName>
    <alternativeName>
        <fullName>Spermidine aminopropyltransferase</fullName>
    </alternativeName>
</protein>
<feature type="chain" id="PRO_0000156540" description="Spermine synthase SPE4">
    <location>
        <begin position="1"/>
        <end position="300"/>
    </location>
</feature>
<feature type="domain" description="PABS">
    <location>
        <begin position="12"/>
        <end position="255"/>
    </location>
</feature>
<feature type="active site" description="Proton acceptor" evidence="1">
    <location>
        <position position="174"/>
    </location>
</feature>
<feature type="binding site" evidence="1">
    <location>
        <position position="44"/>
    </location>
    <ligand>
        <name>S-adenosyl 3-(methylsulfanyl)propylamine</name>
        <dbReference type="ChEBI" id="CHEBI:57443"/>
    </ligand>
</feature>
<feature type="binding site" evidence="1">
    <location>
        <position position="99"/>
    </location>
    <ligand>
        <name>S-adenosyl 3-(methylsulfanyl)propylamine</name>
        <dbReference type="ChEBI" id="CHEBI:57443"/>
    </ligand>
</feature>
<feature type="binding site" evidence="1">
    <location>
        <position position="119"/>
    </location>
    <ligand>
        <name>S-adenosyl 3-(methylsulfanyl)propylamine</name>
        <dbReference type="ChEBI" id="CHEBI:57443"/>
    </ligand>
</feature>
<feature type="binding site" evidence="1">
    <location>
        <begin position="151"/>
        <end position="152"/>
    </location>
    <ligand>
        <name>S-adenosyl 3-(methylsulfanyl)propylamine</name>
        <dbReference type="ChEBI" id="CHEBI:57443"/>
    </ligand>
</feature>
<feature type="binding site" evidence="1">
    <location>
        <position position="177"/>
    </location>
    <ligand>
        <name>spermidine</name>
        <dbReference type="ChEBI" id="CHEBI:57834"/>
    </ligand>
</feature>
<feature type="modified residue" description="Phosphoserine" evidence="6">
    <location>
        <position position="5"/>
    </location>
</feature>
<accession>Q12455</accession>
<accession>D6VYE0</accession>
<accession>Q2VQW3</accession>
<proteinExistence type="evidence at protein level"/>
<comment type="catalytic activity">
    <reaction evidence="3">
        <text>S-adenosyl 3-(methylsulfanyl)propylamine + spermidine = spermine + S-methyl-5'-thioadenosine + H(+)</text>
        <dbReference type="Rhea" id="RHEA:19973"/>
        <dbReference type="ChEBI" id="CHEBI:15378"/>
        <dbReference type="ChEBI" id="CHEBI:17509"/>
        <dbReference type="ChEBI" id="CHEBI:45725"/>
        <dbReference type="ChEBI" id="CHEBI:57443"/>
        <dbReference type="ChEBI" id="CHEBI:57834"/>
        <dbReference type="EC" id="2.5.1.22"/>
    </reaction>
</comment>
<comment type="pathway">
    <text evidence="5">Amine and polyamine biosynthesis; spermine biosynthesis; spermine from spermidine: step 1/1.</text>
</comment>
<comment type="interaction">
    <interactant intactId="EBI-17907">
        <id>Q12455</id>
    </interactant>
    <interactant intactId="EBI-17836">
        <id>Q12074</id>
        <label>SPE3</label>
    </interactant>
    <organismsDiffer>false</organismsDiffer>
    <experiments>3</experiments>
</comment>
<comment type="miscellaneous">
    <text evidence="2">Present with 3870 molecules/cell in log phase SD medium.</text>
</comment>
<comment type="similarity">
    <text evidence="4">Belongs to the spermidine/spermine synthase family.</text>
</comment>
<keyword id="KW-0597">Phosphoprotein</keyword>
<keyword id="KW-0620">Polyamine biosynthesis</keyword>
<keyword id="KW-1185">Reference proteome</keyword>
<keyword id="KW-0808">Transferase</keyword>
<gene>
    <name type="primary">SPE4</name>
    <name type="ordered locus">YLR146C</name>
    <name type="ORF">L9634.5</name>
</gene>
<dbReference type="EC" id="2.5.1.22" evidence="3"/>
<dbReference type="EMBL" id="AF067970">
    <property type="protein sequence ID" value="AAC19368.1"/>
    <property type="molecule type" value="Genomic_DNA"/>
</dbReference>
<dbReference type="EMBL" id="Z73318">
    <property type="protein sequence ID" value="CAA97718.1"/>
    <property type="molecule type" value="Genomic_DNA"/>
</dbReference>
<dbReference type="EMBL" id="U53879">
    <property type="protein sequence ID" value="AAB82380.1"/>
    <property type="molecule type" value="Genomic_DNA"/>
</dbReference>
<dbReference type="EMBL" id="AY899255">
    <property type="protein sequence ID" value="AAX83940.1"/>
    <property type="molecule type" value="mRNA"/>
</dbReference>
<dbReference type="EMBL" id="BK006945">
    <property type="protein sequence ID" value="DAA09456.1"/>
    <property type="molecule type" value="Genomic_DNA"/>
</dbReference>
<dbReference type="PIR" id="S64995">
    <property type="entry name" value="S64995"/>
</dbReference>
<dbReference type="RefSeq" id="NP_013247.1">
    <property type="nucleotide sequence ID" value="NM_001182033.1"/>
</dbReference>
<dbReference type="SMR" id="Q12455"/>
<dbReference type="BioGRID" id="31415">
    <property type="interactions" value="115"/>
</dbReference>
<dbReference type="DIP" id="DIP-4811N"/>
<dbReference type="FunCoup" id="Q12455">
    <property type="interactions" value="145"/>
</dbReference>
<dbReference type="IntAct" id="Q12455">
    <property type="interactions" value="4"/>
</dbReference>
<dbReference type="MINT" id="Q12455"/>
<dbReference type="STRING" id="4932.YLR146C"/>
<dbReference type="iPTMnet" id="Q12455"/>
<dbReference type="PaxDb" id="4932-YLR146C"/>
<dbReference type="PeptideAtlas" id="Q12455"/>
<dbReference type="EnsemblFungi" id="YLR146C_mRNA">
    <property type="protein sequence ID" value="YLR146C"/>
    <property type="gene ID" value="YLR146C"/>
</dbReference>
<dbReference type="GeneID" id="850838"/>
<dbReference type="KEGG" id="sce:YLR146C"/>
<dbReference type="AGR" id="SGD:S000004136"/>
<dbReference type="SGD" id="S000004136">
    <property type="gene designation" value="SPE4"/>
</dbReference>
<dbReference type="VEuPathDB" id="FungiDB:YLR146C"/>
<dbReference type="eggNOG" id="KOG1562">
    <property type="taxonomic scope" value="Eukaryota"/>
</dbReference>
<dbReference type="GeneTree" id="ENSGT00870000136521"/>
<dbReference type="HOGENOM" id="CLU_048199_1_0_1"/>
<dbReference type="InParanoid" id="Q12455"/>
<dbReference type="OMA" id="HIYNEMI"/>
<dbReference type="OrthoDB" id="38125at2759"/>
<dbReference type="BioCyc" id="MetaCyc:YLR146C-MONOMER"/>
<dbReference type="BioCyc" id="YEAST:YLR146C-MONOMER"/>
<dbReference type="UniPathway" id="UPA00249">
    <property type="reaction ID" value="UER00315"/>
</dbReference>
<dbReference type="BioGRID-ORCS" id="850838">
    <property type="hits" value="3 hits in 10 CRISPR screens"/>
</dbReference>
<dbReference type="PRO" id="PR:Q12455"/>
<dbReference type="Proteomes" id="UP000002311">
    <property type="component" value="Chromosome XII"/>
</dbReference>
<dbReference type="RNAct" id="Q12455">
    <property type="molecule type" value="protein"/>
</dbReference>
<dbReference type="GO" id="GO:0005737">
    <property type="term" value="C:cytoplasm"/>
    <property type="evidence" value="ECO:0007005"/>
    <property type="project" value="SGD"/>
</dbReference>
<dbReference type="GO" id="GO:0005829">
    <property type="term" value="C:cytosol"/>
    <property type="evidence" value="ECO:0000318"/>
    <property type="project" value="GO_Central"/>
</dbReference>
<dbReference type="GO" id="GO:0004766">
    <property type="term" value="F:spermidine synthase activity"/>
    <property type="evidence" value="ECO:0000318"/>
    <property type="project" value="GO_Central"/>
</dbReference>
<dbReference type="GO" id="GO:0016768">
    <property type="term" value="F:spermine synthase activity"/>
    <property type="evidence" value="ECO:0000315"/>
    <property type="project" value="SGD"/>
</dbReference>
<dbReference type="GO" id="GO:0015940">
    <property type="term" value="P:pantothenate biosynthetic process"/>
    <property type="evidence" value="ECO:0000315"/>
    <property type="project" value="SGD"/>
</dbReference>
<dbReference type="GO" id="GO:0008295">
    <property type="term" value="P:spermidine biosynthetic process"/>
    <property type="evidence" value="ECO:0000318"/>
    <property type="project" value="GO_Central"/>
</dbReference>
<dbReference type="GO" id="GO:0006597">
    <property type="term" value="P:spermine biosynthetic process"/>
    <property type="evidence" value="ECO:0000315"/>
    <property type="project" value="SGD"/>
</dbReference>
<dbReference type="CDD" id="cd02440">
    <property type="entry name" value="AdoMet_MTases"/>
    <property type="match status" value="1"/>
</dbReference>
<dbReference type="FunFam" id="2.30.140.10:FF:000001">
    <property type="entry name" value="SPE3p Spermidine synthase"/>
    <property type="match status" value="1"/>
</dbReference>
<dbReference type="FunFam" id="3.40.50.150:FF:000013">
    <property type="entry name" value="Spermidine synthase"/>
    <property type="match status" value="1"/>
</dbReference>
<dbReference type="Gene3D" id="2.30.140.10">
    <property type="entry name" value="Spermidine synthase, tetramerisation domain"/>
    <property type="match status" value="1"/>
</dbReference>
<dbReference type="Gene3D" id="3.40.50.150">
    <property type="entry name" value="Vaccinia Virus protein VP39"/>
    <property type="match status" value="1"/>
</dbReference>
<dbReference type="HAMAP" id="MF_00198">
    <property type="entry name" value="Spermidine_synth"/>
    <property type="match status" value="1"/>
</dbReference>
<dbReference type="InterPro" id="IPR030374">
    <property type="entry name" value="PABS"/>
</dbReference>
<dbReference type="InterPro" id="IPR030373">
    <property type="entry name" value="PABS_CS"/>
</dbReference>
<dbReference type="InterPro" id="IPR029063">
    <property type="entry name" value="SAM-dependent_MTases_sf"/>
</dbReference>
<dbReference type="InterPro" id="IPR001045">
    <property type="entry name" value="Spermi_synthase"/>
</dbReference>
<dbReference type="InterPro" id="IPR030668">
    <property type="entry name" value="Spermi_synthase_euk"/>
</dbReference>
<dbReference type="InterPro" id="IPR035246">
    <property type="entry name" value="Spermidine_synt_N"/>
</dbReference>
<dbReference type="InterPro" id="IPR037163">
    <property type="entry name" value="Spermidine_synt_N_sf"/>
</dbReference>
<dbReference type="NCBIfam" id="NF037959">
    <property type="entry name" value="MFS_SpdSyn"/>
    <property type="match status" value="1"/>
</dbReference>
<dbReference type="NCBIfam" id="NF002010">
    <property type="entry name" value="PRK00811.1"/>
    <property type="match status" value="1"/>
</dbReference>
<dbReference type="NCBIfam" id="TIGR00417">
    <property type="entry name" value="speE"/>
    <property type="match status" value="1"/>
</dbReference>
<dbReference type="PANTHER" id="PTHR11558:SF11">
    <property type="entry name" value="SPERMIDINE SYNTHASE"/>
    <property type="match status" value="1"/>
</dbReference>
<dbReference type="PANTHER" id="PTHR11558">
    <property type="entry name" value="SPERMIDINE/SPERMINE SYNTHASE"/>
    <property type="match status" value="1"/>
</dbReference>
<dbReference type="Pfam" id="PF17284">
    <property type="entry name" value="Spermine_synt_N"/>
    <property type="match status" value="1"/>
</dbReference>
<dbReference type="Pfam" id="PF01564">
    <property type="entry name" value="Spermine_synth"/>
    <property type="match status" value="1"/>
</dbReference>
<dbReference type="PIRSF" id="PIRSF000502">
    <property type="entry name" value="Spermidine_synth"/>
    <property type="match status" value="1"/>
</dbReference>
<dbReference type="SUPFAM" id="SSF53335">
    <property type="entry name" value="S-adenosyl-L-methionine-dependent methyltransferases"/>
    <property type="match status" value="1"/>
</dbReference>
<dbReference type="PROSITE" id="PS01330">
    <property type="entry name" value="PABS_1"/>
    <property type="match status" value="1"/>
</dbReference>
<dbReference type="PROSITE" id="PS51006">
    <property type="entry name" value="PABS_2"/>
    <property type="match status" value="1"/>
</dbReference>
<evidence type="ECO:0000250" key="1"/>
<evidence type="ECO:0000269" key="2">
    <source>
    </source>
</evidence>
<evidence type="ECO:0000269" key="3">
    <source>
    </source>
</evidence>
<evidence type="ECO:0000305" key="4"/>
<evidence type="ECO:0000305" key="5">
    <source>
    </source>
</evidence>
<evidence type="ECO:0007744" key="6">
    <source>
    </source>
</evidence>